<evidence type="ECO:0000250" key="1">
    <source>
        <dbReference type="UniProtKB" id="Q7L8A9"/>
    </source>
</evidence>
<evidence type="ECO:0000256" key="2">
    <source>
        <dbReference type="SAM" id="MobiDB-lite"/>
    </source>
</evidence>
<evidence type="ECO:0000269" key="3">
    <source>
    </source>
</evidence>
<evidence type="ECO:0000269" key="4">
    <source>
    </source>
</evidence>
<evidence type="ECO:0000303" key="5">
    <source>
    </source>
</evidence>
<evidence type="ECO:0000305" key="6"/>
<evidence type="ECO:0000305" key="7">
    <source>
    </source>
</evidence>
<evidence type="ECO:0000312" key="8">
    <source>
        <dbReference type="MGI" id="MGI:2442543"/>
    </source>
</evidence>
<comment type="function">
    <text evidence="1 3 4">Tyrosine carboxypeptidase that removes the C-terminal tyrosine residue of alpha-tubulin, thereby regulating microtubule dynamics and function (PubMed:29146868). Acts as an angiogenesis inhibitor: inhibits migration, proliferation and network formation by endothelial cells as well as angiogenesis (PubMed:19204325). This inhibitory effect is selective to endothelial cells as it does not affect the migration of smooth muscle cells or fibroblasts (By similarity).</text>
</comment>
<comment type="catalytic activity">
    <reaction evidence="4">
        <text>C-terminal L-alpha-aminoacyl-L-glutamyl-L-glutamyl-L-tyrosyl-[tubulin] + H2O = C-terminal L-alpha-aminoacyl-L-glutamyl-L-glutamyl-[tubulin] + L-tyrosine</text>
        <dbReference type="Rhea" id="RHEA:57444"/>
        <dbReference type="Rhea" id="RHEA-COMP:16434"/>
        <dbReference type="Rhea" id="RHEA-COMP:16435"/>
        <dbReference type="ChEBI" id="CHEBI:15377"/>
        <dbReference type="ChEBI" id="CHEBI:58315"/>
        <dbReference type="ChEBI" id="CHEBI:149554"/>
        <dbReference type="ChEBI" id="CHEBI:149555"/>
        <dbReference type="EC" id="3.4.17.17"/>
    </reaction>
</comment>
<comment type="subunit">
    <text evidence="4">Interacts with SVBP; interaction enhances VASH1 tyrosine carboxypeptidase activity.</text>
</comment>
<comment type="subcellular location">
    <subcellularLocation>
        <location evidence="1">Cytoplasm</location>
    </subcellularLocation>
    <subcellularLocation>
        <location evidence="1">Secreted</location>
    </subcellularLocation>
    <text evidence="1">Mainly localizes in the cytoplasm. Some fraction is secreted via a non-canonical secretion system; interaction with SVBP promotes secretion.</text>
</comment>
<comment type="tissue specificity">
    <text evidence="3">Expressed at low level in proliferating endothelial cells at the sprouting front but highly expressed in nonproliferating endothelial cells in the termination zone.</text>
</comment>
<comment type="PTM">
    <text evidence="1">Ubiquitinated in vitro.</text>
</comment>
<comment type="similarity">
    <text evidence="6">Belongs to the transglutaminase-like superfamily. Vasohibin family.</text>
</comment>
<comment type="sequence caution" evidence="6">
    <conflict type="frameshift">
        <sequence resource="EMBL-CDS" id="BAC41121"/>
    </conflict>
</comment>
<feature type="chain" id="PRO_0000189981" description="Tubulinyl-Tyr carboxypeptidase 1">
    <location>
        <begin position="1"/>
        <end position="375"/>
    </location>
</feature>
<feature type="region of interest" description="Disordered" evidence="2">
    <location>
        <begin position="1"/>
        <end position="69"/>
    </location>
</feature>
<feature type="region of interest" description="Disordered" evidence="2">
    <location>
        <begin position="309"/>
        <end position="375"/>
    </location>
</feature>
<feature type="region of interest" description="Involved in heparin-binding and antiangiogenic activity" evidence="1">
    <location>
        <begin position="329"/>
        <end position="375"/>
    </location>
</feature>
<feature type="compositionally biased region" description="Low complexity" evidence="2">
    <location>
        <begin position="1"/>
        <end position="33"/>
    </location>
</feature>
<feature type="compositionally biased region" description="Acidic residues" evidence="2">
    <location>
        <begin position="53"/>
        <end position="63"/>
    </location>
</feature>
<feature type="compositionally biased region" description="Basic and acidic residues" evidence="2">
    <location>
        <begin position="347"/>
        <end position="361"/>
    </location>
</feature>
<feature type="active site" evidence="4 7">
    <location>
        <position position="179"/>
    </location>
</feature>
<feature type="active site" evidence="7">
    <location>
        <position position="214"/>
    </location>
</feature>
<feature type="active site" evidence="7">
    <location>
        <position position="231"/>
    </location>
</feature>
<feature type="site" description="Cleavage" evidence="1">
    <location>
        <begin position="39"/>
        <end position="40"/>
    </location>
</feature>
<feature type="site" description="Cleavage" evidence="1">
    <location>
        <begin position="86"/>
        <end position="87"/>
    </location>
</feature>
<feature type="mutagenesis site" description="Abolished tyrosine carboxypeptidase activity." evidence="4">
    <original>C</original>
    <variation>A</variation>
    <location>
        <position position="179"/>
    </location>
</feature>
<feature type="sequence conflict" description="In Ref. 1; BAC41121." evidence="6" ref="1">
    <original>P</original>
    <variation>A</variation>
    <location>
        <position position="2"/>
    </location>
</feature>
<feature type="sequence conflict" description="In Ref. 1; BAC41121." evidence="6" ref="1">
    <original>S</original>
    <variation>G</variation>
    <location>
        <position position="157"/>
    </location>
</feature>
<proteinExistence type="evidence at protein level"/>
<gene>
    <name evidence="8" type="primary">Vash1</name>
    <name type="synonym">Vash</name>
</gene>
<organism>
    <name type="scientific">Mus musculus</name>
    <name type="common">Mouse</name>
    <dbReference type="NCBI Taxonomy" id="10090"/>
    <lineage>
        <taxon>Eukaryota</taxon>
        <taxon>Metazoa</taxon>
        <taxon>Chordata</taxon>
        <taxon>Craniata</taxon>
        <taxon>Vertebrata</taxon>
        <taxon>Euteleostomi</taxon>
        <taxon>Mammalia</taxon>
        <taxon>Eutheria</taxon>
        <taxon>Euarchontoglires</taxon>
        <taxon>Glires</taxon>
        <taxon>Rodentia</taxon>
        <taxon>Myomorpha</taxon>
        <taxon>Muroidea</taxon>
        <taxon>Muridae</taxon>
        <taxon>Murinae</taxon>
        <taxon>Mus</taxon>
        <taxon>Mus</taxon>
    </lineage>
</organism>
<dbReference type="EC" id="3.4.17.17" evidence="4"/>
<dbReference type="EMBL" id="AK090166">
    <property type="protein sequence ID" value="BAC41121.1"/>
    <property type="status" value="ALT_FRAME"/>
    <property type="molecule type" value="mRNA"/>
</dbReference>
<dbReference type="EMBL" id="AC102689">
    <property type="status" value="NOT_ANNOTATED_CDS"/>
    <property type="molecule type" value="Genomic_DNA"/>
</dbReference>
<dbReference type="CCDS" id="CCDS49118.1"/>
<dbReference type="RefSeq" id="NP_796328.2">
    <property type="nucleotide sequence ID" value="NM_177354.4"/>
</dbReference>
<dbReference type="SMR" id="Q8C1W1"/>
<dbReference type="BioGRID" id="231969">
    <property type="interactions" value="2"/>
</dbReference>
<dbReference type="FunCoup" id="Q8C1W1">
    <property type="interactions" value="191"/>
</dbReference>
<dbReference type="STRING" id="10090.ENSMUSP00000021681"/>
<dbReference type="iPTMnet" id="Q8C1W1"/>
<dbReference type="PhosphoSitePlus" id="Q8C1W1"/>
<dbReference type="PaxDb" id="10090-ENSMUSP00000021681"/>
<dbReference type="ProteomicsDB" id="297974"/>
<dbReference type="Antibodypedia" id="10">
    <property type="antibodies" value="288 antibodies from 34 providers"/>
</dbReference>
<dbReference type="DNASU" id="238328"/>
<dbReference type="Ensembl" id="ENSMUST00000021681.4">
    <property type="protein sequence ID" value="ENSMUSP00000021681.4"/>
    <property type="gene ID" value="ENSMUSG00000021256.6"/>
</dbReference>
<dbReference type="GeneID" id="238328"/>
<dbReference type="KEGG" id="mmu:238328"/>
<dbReference type="UCSC" id="uc007ohx.2">
    <property type="organism name" value="mouse"/>
</dbReference>
<dbReference type="AGR" id="MGI:2442543"/>
<dbReference type="CTD" id="22846"/>
<dbReference type="MGI" id="MGI:2442543">
    <property type="gene designation" value="Vash1"/>
</dbReference>
<dbReference type="VEuPathDB" id="HostDB:ENSMUSG00000021256"/>
<dbReference type="eggNOG" id="ENOG502QPPX">
    <property type="taxonomic scope" value="Eukaryota"/>
</dbReference>
<dbReference type="GeneTree" id="ENSGT00390000012703"/>
<dbReference type="HOGENOM" id="CLU_061405_0_1_1"/>
<dbReference type="InParanoid" id="Q8C1W1"/>
<dbReference type="OMA" id="MWRHVAK"/>
<dbReference type="OrthoDB" id="9974232at2759"/>
<dbReference type="PhylomeDB" id="Q8C1W1"/>
<dbReference type="TreeFam" id="TF329370"/>
<dbReference type="BioGRID-ORCS" id="238328">
    <property type="hits" value="3 hits in 77 CRISPR screens"/>
</dbReference>
<dbReference type="ChiTaRS" id="Vash1">
    <property type="organism name" value="mouse"/>
</dbReference>
<dbReference type="PRO" id="PR:Q8C1W1"/>
<dbReference type="Proteomes" id="UP000000589">
    <property type="component" value="Chromosome 12"/>
</dbReference>
<dbReference type="RNAct" id="Q8C1W1">
    <property type="molecule type" value="protein"/>
</dbReference>
<dbReference type="Bgee" id="ENSMUSG00000021256">
    <property type="expression patterns" value="Expressed in embryonic brain and 66 other cell types or tissues"/>
</dbReference>
<dbReference type="GO" id="GO:0045177">
    <property type="term" value="C:apical part of cell"/>
    <property type="evidence" value="ECO:0000266"/>
    <property type="project" value="MGI"/>
</dbReference>
<dbReference type="GO" id="GO:0005737">
    <property type="term" value="C:cytoplasm"/>
    <property type="evidence" value="ECO:0000266"/>
    <property type="project" value="MGI"/>
</dbReference>
<dbReference type="GO" id="GO:0005783">
    <property type="term" value="C:endoplasmic reticulum"/>
    <property type="evidence" value="ECO:0007669"/>
    <property type="project" value="Ensembl"/>
</dbReference>
<dbReference type="GO" id="GO:0005615">
    <property type="term" value="C:extracellular space"/>
    <property type="evidence" value="ECO:0000266"/>
    <property type="project" value="MGI"/>
</dbReference>
<dbReference type="GO" id="GO:0003779">
    <property type="term" value="F:actin binding"/>
    <property type="evidence" value="ECO:0000314"/>
    <property type="project" value="UniProtKB"/>
</dbReference>
<dbReference type="GO" id="GO:0004181">
    <property type="term" value="F:metallocarboxypeptidase activity"/>
    <property type="evidence" value="ECO:0000314"/>
    <property type="project" value="UniProtKB"/>
</dbReference>
<dbReference type="GO" id="GO:0106423">
    <property type="term" value="F:tubulin-tyrosine carboxypeptidase"/>
    <property type="evidence" value="ECO:0007669"/>
    <property type="project" value="UniProtKB-EC"/>
</dbReference>
<dbReference type="GO" id="GO:0001525">
    <property type="term" value="P:angiogenesis"/>
    <property type="evidence" value="ECO:0000266"/>
    <property type="project" value="MGI"/>
</dbReference>
<dbReference type="GO" id="GO:0060716">
    <property type="term" value="P:labyrinthine layer blood vessel development"/>
    <property type="evidence" value="ECO:0000315"/>
    <property type="project" value="MGI"/>
</dbReference>
<dbReference type="GO" id="GO:0016525">
    <property type="term" value="P:negative regulation of angiogenesis"/>
    <property type="evidence" value="ECO:0000314"/>
    <property type="project" value="MGI"/>
</dbReference>
<dbReference type="GO" id="GO:0043537">
    <property type="term" value="P:negative regulation of blood vessel endothelial cell migration"/>
    <property type="evidence" value="ECO:0007669"/>
    <property type="project" value="Ensembl"/>
</dbReference>
<dbReference type="GO" id="GO:0010596">
    <property type="term" value="P:negative regulation of endothelial cell migration"/>
    <property type="evidence" value="ECO:0000266"/>
    <property type="project" value="MGI"/>
</dbReference>
<dbReference type="GO" id="GO:0001937">
    <property type="term" value="P:negative regulation of endothelial cell proliferation"/>
    <property type="evidence" value="ECO:0000266"/>
    <property type="project" value="MGI"/>
</dbReference>
<dbReference type="GO" id="GO:1901491">
    <property type="term" value="P:negative regulation of lymphangiogenesis"/>
    <property type="evidence" value="ECO:0000266"/>
    <property type="project" value="MGI"/>
</dbReference>
<dbReference type="GO" id="GO:0060674">
    <property type="term" value="P:placenta blood vessel development"/>
    <property type="evidence" value="ECO:0000315"/>
    <property type="project" value="MGI"/>
</dbReference>
<dbReference type="GO" id="GO:0010628">
    <property type="term" value="P:positive regulation of gene expression"/>
    <property type="evidence" value="ECO:0000266"/>
    <property type="project" value="MGI"/>
</dbReference>
<dbReference type="GO" id="GO:0006508">
    <property type="term" value="P:proteolysis"/>
    <property type="evidence" value="ECO:0000314"/>
    <property type="project" value="UniProtKB"/>
</dbReference>
<dbReference type="GO" id="GO:0051726">
    <property type="term" value="P:regulation of cell cycle"/>
    <property type="evidence" value="ECO:0007669"/>
    <property type="project" value="UniProtKB-KW"/>
</dbReference>
<dbReference type="GO" id="GO:2000772">
    <property type="term" value="P:regulation of cellular senescence"/>
    <property type="evidence" value="ECO:0000266"/>
    <property type="project" value="MGI"/>
</dbReference>
<dbReference type="GO" id="GO:0009611">
    <property type="term" value="P:response to wounding"/>
    <property type="evidence" value="ECO:0000266"/>
    <property type="project" value="MGI"/>
</dbReference>
<dbReference type="InterPro" id="IPR028131">
    <property type="entry name" value="VASH1"/>
</dbReference>
<dbReference type="PANTHER" id="PTHR15750:SF5">
    <property type="entry name" value="TUBULINYL-TYR CARBOXYPEPTIDASE 1"/>
    <property type="match status" value="1"/>
</dbReference>
<dbReference type="PANTHER" id="PTHR15750">
    <property type="entry name" value="VASOHIBIN-1-LIKE ISOFORM X2"/>
    <property type="match status" value="1"/>
</dbReference>
<dbReference type="Pfam" id="PF14822">
    <property type="entry name" value="Vasohibin"/>
    <property type="match status" value="1"/>
</dbReference>
<keyword id="KW-0121">Carboxypeptidase</keyword>
<keyword id="KW-0131">Cell cycle</keyword>
<keyword id="KW-0963">Cytoplasm</keyword>
<keyword id="KW-0338">Growth arrest</keyword>
<keyword id="KW-0378">Hydrolase</keyword>
<keyword id="KW-0645">Protease</keyword>
<keyword id="KW-1185">Reference proteome</keyword>
<keyword id="KW-0964">Secreted</keyword>
<keyword id="KW-0832">Ubl conjugation</keyword>
<accession>Q8C1W1</accession>
<accession>E9QKT9</accession>
<accession>Q8C394</accession>
<sequence length="375" mass="41875">MPGGKKVVPSGSSSASPNAAATTTAAAAAAAAAPHSGTKRLETTEGASAQRDEEPEEEGEEDLRDGGVPFFINRGGLPVDEATWERMWKHVAKIHPDGEKVALRIRGATDLPKIPIPSVPTFQPTTPVPERLEAVQRYIRELQYNHTGTQFFEIKKSRPLTGLMDLAKEMTKEALPIKCLEAVILGIYLTNSMPTLERFPISFKTYFSGNYFRHIVLGVNFGGRYGALGMSRREDLMYKPPAFRTLSELVLDYEAAYGRCWHVLKKVKLGQCVSHDPHSVEQIEWKHSVLDVERLGREDFRKELERHARDMRLKIGKGTGPPSPTKDRKKDVSSPQRAQSSPHRRNSRSERRPSGEKKPAEPKAMPDLSGYQIRV</sequence>
<protein>
    <recommendedName>
        <fullName evidence="6">Tubulinyl-Tyr carboxypeptidase 1</fullName>
        <ecNumber evidence="4">3.4.17.17</ecNumber>
    </recommendedName>
    <alternativeName>
        <fullName evidence="6">Tyrosine carboxypeptidase 1</fullName>
        <shortName evidence="6">TTCP 1</shortName>
    </alternativeName>
    <alternativeName>
        <fullName evidence="5">Vasohibin-1</fullName>
    </alternativeName>
</protein>
<reference key="1">
    <citation type="journal article" date="2005" name="Science">
        <title>The transcriptional landscape of the mammalian genome.</title>
        <authorList>
            <person name="Carninci P."/>
            <person name="Kasukawa T."/>
            <person name="Katayama S."/>
            <person name="Gough J."/>
            <person name="Frith M.C."/>
            <person name="Maeda N."/>
            <person name="Oyama R."/>
            <person name="Ravasi T."/>
            <person name="Lenhard B."/>
            <person name="Wells C."/>
            <person name="Kodzius R."/>
            <person name="Shimokawa K."/>
            <person name="Bajic V.B."/>
            <person name="Brenner S.E."/>
            <person name="Batalov S."/>
            <person name="Forrest A.R."/>
            <person name="Zavolan M."/>
            <person name="Davis M.J."/>
            <person name="Wilming L.G."/>
            <person name="Aidinis V."/>
            <person name="Allen J.E."/>
            <person name="Ambesi-Impiombato A."/>
            <person name="Apweiler R."/>
            <person name="Aturaliya R.N."/>
            <person name="Bailey T.L."/>
            <person name="Bansal M."/>
            <person name="Baxter L."/>
            <person name="Beisel K.W."/>
            <person name="Bersano T."/>
            <person name="Bono H."/>
            <person name="Chalk A.M."/>
            <person name="Chiu K.P."/>
            <person name="Choudhary V."/>
            <person name="Christoffels A."/>
            <person name="Clutterbuck D.R."/>
            <person name="Crowe M.L."/>
            <person name="Dalla E."/>
            <person name="Dalrymple B.P."/>
            <person name="de Bono B."/>
            <person name="Della Gatta G."/>
            <person name="di Bernardo D."/>
            <person name="Down T."/>
            <person name="Engstrom P."/>
            <person name="Fagiolini M."/>
            <person name="Faulkner G."/>
            <person name="Fletcher C.F."/>
            <person name="Fukushima T."/>
            <person name="Furuno M."/>
            <person name="Futaki S."/>
            <person name="Gariboldi M."/>
            <person name="Georgii-Hemming P."/>
            <person name="Gingeras T.R."/>
            <person name="Gojobori T."/>
            <person name="Green R.E."/>
            <person name="Gustincich S."/>
            <person name="Harbers M."/>
            <person name="Hayashi Y."/>
            <person name="Hensch T.K."/>
            <person name="Hirokawa N."/>
            <person name="Hill D."/>
            <person name="Huminiecki L."/>
            <person name="Iacono M."/>
            <person name="Ikeo K."/>
            <person name="Iwama A."/>
            <person name="Ishikawa T."/>
            <person name="Jakt M."/>
            <person name="Kanapin A."/>
            <person name="Katoh M."/>
            <person name="Kawasawa Y."/>
            <person name="Kelso J."/>
            <person name="Kitamura H."/>
            <person name="Kitano H."/>
            <person name="Kollias G."/>
            <person name="Krishnan S.P."/>
            <person name="Kruger A."/>
            <person name="Kummerfeld S.K."/>
            <person name="Kurochkin I.V."/>
            <person name="Lareau L.F."/>
            <person name="Lazarevic D."/>
            <person name="Lipovich L."/>
            <person name="Liu J."/>
            <person name="Liuni S."/>
            <person name="McWilliam S."/>
            <person name="Madan Babu M."/>
            <person name="Madera M."/>
            <person name="Marchionni L."/>
            <person name="Matsuda H."/>
            <person name="Matsuzawa S."/>
            <person name="Miki H."/>
            <person name="Mignone F."/>
            <person name="Miyake S."/>
            <person name="Morris K."/>
            <person name="Mottagui-Tabar S."/>
            <person name="Mulder N."/>
            <person name="Nakano N."/>
            <person name="Nakauchi H."/>
            <person name="Ng P."/>
            <person name="Nilsson R."/>
            <person name="Nishiguchi S."/>
            <person name="Nishikawa S."/>
            <person name="Nori F."/>
            <person name="Ohara O."/>
            <person name="Okazaki Y."/>
            <person name="Orlando V."/>
            <person name="Pang K.C."/>
            <person name="Pavan W.J."/>
            <person name="Pavesi G."/>
            <person name="Pesole G."/>
            <person name="Petrovsky N."/>
            <person name="Piazza S."/>
            <person name="Reed J."/>
            <person name="Reid J.F."/>
            <person name="Ring B.Z."/>
            <person name="Ringwald M."/>
            <person name="Rost B."/>
            <person name="Ruan Y."/>
            <person name="Salzberg S.L."/>
            <person name="Sandelin A."/>
            <person name="Schneider C."/>
            <person name="Schoenbach C."/>
            <person name="Sekiguchi K."/>
            <person name="Semple C.A."/>
            <person name="Seno S."/>
            <person name="Sessa L."/>
            <person name="Sheng Y."/>
            <person name="Shibata Y."/>
            <person name="Shimada H."/>
            <person name="Shimada K."/>
            <person name="Silva D."/>
            <person name="Sinclair B."/>
            <person name="Sperling S."/>
            <person name="Stupka E."/>
            <person name="Sugiura K."/>
            <person name="Sultana R."/>
            <person name="Takenaka Y."/>
            <person name="Taki K."/>
            <person name="Tammoja K."/>
            <person name="Tan S.L."/>
            <person name="Tang S."/>
            <person name="Taylor M.S."/>
            <person name="Tegner J."/>
            <person name="Teichmann S.A."/>
            <person name="Ueda H.R."/>
            <person name="van Nimwegen E."/>
            <person name="Verardo R."/>
            <person name="Wei C.L."/>
            <person name="Yagi K."/>
            <person name="Yamanishi H."/>
            <person name="Zabarovsky E."/>
            <person name="Zhu S."/>
            <person name="Zimmer A."/>
            <person name="Hide W."/>
            <person name="Bult C."/>
            <person name="Grimmond S.M."/>
            <person name="Teasdale R.D."/>
            <person name="Liu E.T."/>
            <person name="Brusic V."/>
            <person name="Quackenbush J."/>
            <person name="Wahlestedt C."/>
            <person name="Mattick J.S."/>
            <person name="Hume D.A."/>
            <person name="Kai C."/>
            <person name="Sasaki D."/>
            <person name="Tomaru Y."/>
            <person name="Fukuda S."/>
            <person name="Kanamori-Katayama M."/>
            <person name="Suzuki M."/>
            <person name="Aoki J."/>
            <person name="Arakawa T."/>
            <person name="Iida J."/>
            <person name="Imamura K."/>
            <person name="Itoh M."/>
            <person name="Kato T."/>
            <person name="Kawaji H."/>
            <person name="Kawagashira N."/>
            <person name="Kawashima T."/>
            <person name="Kojima M."/>
            <person name="Kondo S."/>
            <person name="Konno H."/>
            <person name="Nakano K."/>
            <person name="Ninomiya N."/>
            <person name="Nishio T."/>
            <person name="Okada M."/>
            <person name="Plessy C."/>
            <person name="Shibata K."/>
            <person name="Shiraki T."/>
            <person name="Suzuki S."/>
            <person name="Tagami M."/>
            <person name="Waki K."/>
            <person name="Watahiki A."/>
            <person name="Okamura-Oho Y."/>
            <person name="Suzuki H."/>
            <person name="Kawai J."/>
            <person name="Hayashizaki Y."/>
        </authorList>
    </citation>
    <scope>NUCLEOTIDE SEQUENCE [LARGE SCALE MRNA]</scope>
    <source>
        <strain>C57BL/6J</strain>
        <tissue>Embryonic brain</tissue>
    </source>
</reference>
<reference key="2">
    <citation type="journal article" date="2009" name="PLoS Biol.">
        <title>Lineage-specific biology revealed by a finished genome assembly of the mouse.</title>
        <authorList>
            <person name="Church D.M."/>
            <person name="Goodstadt L."/>
            <person name="Hillier L.W."/>
            <person name="Zody M.C."/>
            <person name="Goldstein S."/>
            <person name="She X."/>
            <person name="Bult C.J."/>
            <person name="Agarwala R."/>
            <person name="Cherry J.L."/>
            <person name="DiCuccio M."/>
            <person name="Hlavina W."/>
            <person name="Kapustin Y."/>
            <person name="Meric P."/>
            <person name="Maglott D."/>
            <person name="Birtle Z."/>
            <person name="Marques A.C."/>
            <person name="Graves T."/>
            <person name="Zhou S."/>
            <person name="Teague B."/>
            <person name="Potamousis K."/>
            <person name="Churas C."/>
            <person name="Place M."/>
            <person name="Herschleb J."/>
            <person name="Runnheim R."/>
            <person name="Forrest D."/>
            <person name="Amos-Landgraf J."/>
            <person name="Schwartz D.C."/>
            <person name="Cheng Z."/>
            <person name="Lindblad-Toh K."/>
            <person name="Eichler E.E."/>
            <person name="Ponting C.P."/>
        </authorList>
    </citation>
    <scope>NUCLEOTIDE SEQUENCE [LARGE SCALE GENOMIC DNA]</scope>
    <source>
        <strain>C57BL/6J</strain>
    </source>
</reference>
<reference key="3">
    <citation type="journal article" date="2009" name="Blood">
        <title>Distinctive localization and opposed roles of vasohibin-1 and vasohibin-2 in the regulation of angiogenesis.</title>
        <authorList>
            <person name="Kimura H."/>
            <person name="Miyashita H."/>
            <person name="Suzuki Y."/>
            <person name="Kobayashi M."/>
            <person name="Watanabe K."/>
            <person name="Sonoda H."/>
            <person name="Ohta H."/>
            <person name="Fujiwara T."/>
            <person name="Shimosegawa T."/>
            <person name="Sato Y."/>
        </authorList>
    </citation>
    <scope>FUNCTION</scope>
    <scope>TISSUE SPECIFICITY</scope>
</reference>
<reference key="4">
    <citation type="journal article" date="2016" name="Bioinformatics">
        <title>Vasohibins: new transglutaminase-like cysteine proteases possessing a non-canonical Cys-His-Ser catalytic triad.</title>
        <authorList>
            <person name="Sanchez-Pulido L."/>
            <person name="Ponting C.P."/>
        </authorList>
    </citation>
    <scope>IDENTIFICATION AS A PROTEASE</scope>
    <scope>ACTIVE SITES</scope>
</reference>
<reference key="5">
    <citation type="journal article" date="2017" name="Science">
        <title>Vasohibins/SVBP are tubulin carboxypeptidases (TCPs) that regulate neuron differentiation.</title>
        <authorList>
            <person name="Aillaud C."/>
            <person name="Bosc C."/>
            <person name="Peris L."/>
            <person name="Bosson A."/>
            <person name="Heemeryck P."/>
            <person name="Van Dijk J."/>
            <person name="Le Friec J."/>
            <person name="Boulan B."/>
            <person name="Vossier F."/>
            <person name="Sanman L.E."/>
            <person name="Syed S."/>
            <person name="Amara N."/>
            <person name="Coute Y."/>
            <person name="Lafanechere L."/>
            <person name="Denarier E."/>
            <person name="Delphin C."/>
            <person name="Pelletier L."/>
            <person name="Humbert S."/>
            <person name="Bogyo M."/>
            <person name="Andrieux A."/>
            <person name="Rogowski K."/>
            <person name="Moutin M.J."/>
        </authorList>
    </citation>
    <scope>FUNCTION</scope>
    <scope>CATALYTIC ACTIVITY</scope>
    <scope>INTERACTION WITH SVBP</scope>
    <scope>ACTIVE SITE</scope>
    <scope>IDENTIFICATION BY MASS SPECTROMETRY</scope>
    <scope>MUTAGENESIS OF CYS-179</scope>
</reference>
<name>VASH1_MOUSE</name>